<protein>
    <recommendedName>
        <fullName evidence="4">Large ribosomal subunit protein eL37</fullName>
    </recommendedName>
    <alternativeName>
        <fullName>60S ribosomal protein L37</fullName>
    </alternativeName>
</protein>
<proteinExistence type="evidence at protein level"/>
<gene>
    <name type="primary">RPL37</name>
    <name type="ordered locus">ECU07_1460</name>
</gene>
<evidence type="ECO:0000250" key="1"/>
<evidence type="ECO:0000255" key="2"/>
<evidence type="ECO:0000256" key="3">
    <source>
        <dbReference type="SAM" id="MobiDB-lite"/>
    </source>
</evidence>
<evidence type="ECO:0000305" key="4"/>
<feature type="chain" id="PRO_0000370507" description="Large ribosomal subunit protein eL37">
    <location>
        <begin position="1"/>
        <end position="90"/>
    </location>
</feature>
<feature type="zinc finger region" description="C4-type" evidence="2">
    <location>
        <begin position="19"/>
        <end position="37"/>
    </location>
</feature>
<feature type="region of interest" description="Disordered" evidence="3">
    <location>
        <begin position="21"/>
        <end position="59"/>
    </location>
</feature>
<feature type="compositionally biased region" description="Basic residues" evidence="3">
    <location>
        <begin position="21"/>
        <end position="31"/>
    </location>
</feature>
<feature type="binding site" evidence="1">
    <location>
        <position position="19"/>
    </location>
    <ligand>
        <name>Zn(2+)</name>
        <dbReference type="ChEBI" id="CHEBI:29105"/>
    </ligand>
</feature>
<feature type="binding site" evidence="1">
    <location>
        <position position="22"/>
    </location>
    <ligand>
        <name>Zn(2+)</name>
        <dbReference type="ChEBI" id="CHEBI:29105"/>
    </ligand>
</feature>
<feature type="binding site" evidence="1">
    <location>
        <position position="34"/>
    </location>
    <ligand>
        <name>Zn(2+)</name>
        <dbReference type="ChEBI" id="CHEBI:29105"/>
    </ligand>
</feature>
<feature type="binding site" evidence="1">
    <location>
        <position position="37"/>
    </location>
    <ligand>
        <name>Zn(2+)</name>
        <dbReference type="ChEBI" id="CHEBI:29105"/>
    </ligand>
</feature>
<accession>Q8SRH5</accession>
<organism>
    <name type="scientific">Encephalitozoon cuniculi (strain GB-M1)</name>
    <name type="common">Microsporidian parasite</name>
    <dbReference type="NCBI Taxonomy" id="284813"/>
    <lineage>
        <taxon>Eukaryota</taxon>
        <taxon>Fungi</taxon>
        <taxon>Fungi incertae sedis</taxon>
        <taxon>Microsporidia</taxon>
        <taxon>Unikaryonidae</taxon>
        <taxon>Encephalitozoon</taxon>
    </lineage>
</organism>
<dbReference type="EMBL" id="AL590447">
    <property type="protein sequence ID" value="CAD25678.1"/>
    <property type="molecule type" value="Genomic_DNA"/>
</dbReference>
<dbReference type="RefSeq" id="NP_586074.1">
    <property type="nucleotide sequence ID" value="NM_001041696.1"/>
</dbReference>
<dbReference type="PDB" id="7QEP">
    <property type="method" value="EM"/>
    <property type="resolution" value="2.70 A"/>
    <property type="chains" value="O7=1-90"/>
</dbReference>
<dbReference type="PDBsum" id="7QEP"/>
<dbReference type="EMDB" id="EMD-13936"/>
<dbReference type="SMR" id="Q8SRH5"/>
<dbReference type="FunCoup" id="Q8SRH5">
    <property type="interactions" value="100"/>
</dbReference>
<dbReference type="STRING" id="284813.Q8SRH5"/>
<dbReference type="GeneID" id="859504"/>
<dbReference type="KEGG" id="ecu:ECU07_1460"/>
<dbReference type="VEuPathDB" id="MicrosporidiaDB:ECU07_1460"/>
<dbReference type="HOGENOM" id="CLU_150908_2_1_1"/>
<dbReference type="InParanoid" id="Q8SRH5"/>
<dbReference type="OMA" id="RMAYLKH"/>
<dbReference type="OrthoDB" id="10259236at2759"/>
<dbReference type="Proteomes" id="UP000000819">
    <property type="component" value="Chromosome VII"/>
</dbReference>
<dbReference type="GO" id="GO:0022625">
    <property type="term" value="C:cytosolic large ribosomal subunit"/>
    <property type="evidence" value="ECO:0007669"/>
    <property type="project" value="TreeGrafter"/>
</dbReference>
<dbReference type="GO" id="GO:0019843">
    <property type="term" value="F:rRNA binding"/>
    <property type="evidence" value="ECO:0007669"/>
    <property type="project" value="UniProtKB-KW"/>
</dbReference>
<dbReference type="GO" id="GO:0003735">
    <property type="term" value="F:structural constituent of ribosome"/>
    <property type="evidence" value="ECO:0007669"/>
    <property type="project" value="InterPro"/>
</dbReference>
<dbReference type="GO" id="GO:0008270">
    <property type="term" value="F:zinc ion binding"/>
    <property type="evidence" value="ECO:0007669"/>
    <property type="project" value="UniProtKB-KW"/>
</dbReference>
<dbReference type="GO" id="GO:0006412">
    <property type="term" value="P:translation"/>
    <property type="evidence" value="ECO:0007669"/>
    <property type="project" value="InterPro"/>
</dbReference>
<dbReference type="Gene3D" id="2.20.25.30">
    <property type="match status" value="1"/>
</dbReference>
<dbReference type="InterPro" id="IPR001569">
    <property type="entry name" value="Ribosomal_eL37"/>
</dbReference>
<dbReference type="InterPro" id="IPR011331">
    <property type="entry name" value="Ribosomal_eL37/eL43"/>
</dbReference>
<dbReference type="InterPro" id="IPR011332">
    <property type="entry name" value="Ribosomal_zn-bd"/>
</dbReference>
<dbReference type="PANTHER" id="PTHR10768">
    <property type="entry name" value="60S RIBOSOMAL PROTEIN L37"/>
    <property type="match status" value="1"/>
</dbReference>
<dbReference type="PANTHER" id="PTHR10768:SF0">
    <property type="entry name" value="RIBOSOMAL PROTEIN L37"/>
    <property type="match status" value="1"/>
</dbReference>
<dbReference type="Pfam" id="PF01907">
    <property type="entry name" value="Ribosomal_L37e"/>
    <property type="match status" value="1"/>
</dbReference>
<dbReference type="SUPFAM" id="SSF57829">
    <property type="entry name" value="Zn-binding ribosomal proteins"/>
    <property type="match status" value="1"/>
</dbReference>
<name>RL37_ENCCU</name>
<comment type="function">
    <text evidence="1">Binds to the 23S rRNA.</text>
</comment>
<comment type="cofactor">
    <cofactor evidence="1">
        <name>Zn(2+)</name>
        <dbReference type="ChEBI" id="CHEBI:29105"/>
    </cofactor>
    <text evidence="1">Binds 1 zinc ion per subunit.</text>
</comment>
<comment type="similarity">
    <text evidence="4">Belongs to the eukaryotic ribosomal protein eL37 family.</text>
</comment>
<sequence>MSKGTASFGKKNKRNTEMCRRCGRQSYHKQKNSCSSCGYPNPKMRNPGSIKARRRRTIGTGRMRYMKRELRAAKNGHKGDPILRTLWAKN</sequence>
<keyword id="KW-0002">3D-structure</keyword>
<keyword id="KW-0479">Metal-binding</keyword>
<keyword id="KW-1185">Reference proteome</keyword>
<keyword id="KW-0687">Ribonucleoprotein</keyword>
<keyword id="KW-0689">Ribosomal protein</keyword>
<keyword id="KW-0694">RNA-binding</keyword>
<keyword id="KW-0699">rRNA-binding</keyword>
<keyword id="KW-0862">Zinc</keyword>
<keyword id="KW-0863">Zinc-finger</keyword>
<reference key="1">
    <citation type="journal article" date="2001" name="Nature">
        <title>Genome sequence and gene compaction of the eukaryote parasite Encephalitozoon cuniculi.</title>
        <authorList>
            <person name="Katinka M.D."/>
            <person name="Duprat S."/>
            <person name="Cornillot E."/>
            <person name="Metenier G."/>
            <person name="Thomarat F."/>
            <person name="Prensier G."/>
            <person name="Barbe V."/>
            <person name="Peyretaillade E."/>
            <person name="Brottier P."/>
            <person name="Wincker P."/>
            <person name="Delbac F."/>
            <person name="El Alaoui H."/>
            <person name="Peyret P."/>
            <person name="Saurin W."/>
            <person name="Gouy M."/>
            <person name="Weissenbach J."/>
            <person name="Vivares C.P."/>
        </authorList>
    </citation>
    <scope>NUCLEOTIDE SEQUENCE [LARGE SCALE GENOMIC DNA]</scope>
    <source>
        <strain>GB-M1</strain>
    </source>
</reference>